<organism>
    <name type="scientific">Bordetella avium (strain 197N)</name>
    <dbReference type="NCBI Taxonomy" id="360910"/>
    <lineage>
        <taxon>Bacteria</taxon>
        <taxon>Pseudomonadati</taxon>
        <taxon>Pseudomonadota</taxon>
        <taxon>Betaproteobacteria</taxon>
        <taxon>Burkholderiales</taxon>
        <taxon>Alcaligenaceae</taxon>
        <taxon>Bordetella</taxon>
    </lineage>
</organism>
<dbReference type="EC" id="2.1.1.192" evidence="1"/>
<dbReference type="EMBL" id="AM167904">
    <property type="protein sequence ID" value="CAJ49956.1"/>
    <property type="molecule type" value="Genomic_DNA"/>
</dbReference>
<dbReference type="RefSeq" id="WP_012418007.1">
    <property type="nucleotide sequence ID" value="NC_010645.1"/>
</dbReference>
<dbReference type="SMR" id="Q2KY87"/>
<dbReference type="STRING" id="360910.BAV2346"/>
<dbReference type="GeneID" id="92934477"/>
<dbReference type="KEGG" id="bav:BAV2346"/>
<dbReference type="eggNOG" id="COG0820">
    <property type="taxonomic scope" value="Bacteria"/>
</dbReference>
<dbReference type="HOGENOM" id="CLU_029101_0_0_4"/>
<dbReference type="OrthoDB" id="9793973at2"/>
<dbReference type="Proteomes" id="UP000001977">
    <property type="component" value="Chromosome"/>
</dbReference>
<dbReference type="GO" id="GO:0005737">
    <property type="term" value="C:cytoplasm"/>
    <property type="evidence" value="ECO:0007669"/>
    <property type="project" value="UniProtKB-SubCell"/>
</dbReference>
<dbReference type="GO" id="GO:0051539">
    <property type="term" value="F:4 iron, 4 sulfur cluster binding"/>
    <property type="evidence" value="ECO:0007669"/>
    <property type="project" value="UniProtKB-UniRule"/>
</dbReference>
<dbReference type="GO" id="GO:0046872">
    <property type="term" value="F:metal ion binding"/>
    <property type="evidence" value="ECO:0007669"/>
    <property type="project" value="UniProtKB-KW"/>
</dbReference>
<dbReference type="GO" id="GO:0070040">
    <property type="term" value="F:rRNA (adenine(2503)-C2-)-methyltransferase activity"/>
    <property type="evidence" value="ECO:0007669"/>
    <property type="project" value="UniProtKB-UniRule"/>
</dbReference>
<dbReference type="GO" id="GO:0019843">
    <property type="term" value="F:rRNA binding"/>
    <property type="evidence" value="ECO:0007669"/>
    <property type="project" value="UniProtKB-UniRule"/>
</dbReference>
<dbReference type="GO" id="GO:0002935">
    <property type="term" value="F:tRNA (adenine(37)-C2)-methyltransferase activity"/>
    <property type="evidence" value="ECO:0007669"/>
    <property type="project" value="UniProtKB-UniRule"/>
</dbReference>
<dbReference type="GO" id="GO:0000049">
    <property type="term" value="F:tRNA binding"/>
    <property type="evidence" value="ECO:0007669"/>
    <property type="project" value="UniProtKB-UniRule"/>
</dbReference>
<dbReference type="GO" id="GO:0070475">
    <property type="term" value="P:rRNA base methylation"/>
    <property type="evidence" value="ECO:0007669"/>
    <property type="project" value="UniProtKB-UniRule"/>
</dbReference>
<dbReference type="GO" id="GO:0030488">
    <property type="term" value="P:tRNA methylation"/>
    <property type="evidence" value="ECO:0007669"/>
    <property type="project" value="UniProtKB-UniRule"/>
</dbReference>
<dbReference type="CDD" id="cd01335">
    <property type="entry name" value="Radical_SAM"/>
    <property type="match status" value="1"/>
</dbReference>
<dbReference type="FunFam" id="3.20.20.70:FF:000008">
    <property type="entry name" value="Dual-specificity RNA methyltransferase RlmN"/>
    <property type="match status" value="1"/>
</dbReference>
<dbReference type="Gene3D" id="1.10.150.530">
    <property type="match status" value="1"/>
</dbReference>
<dbReference type="Gene3D" id="3.20.20.70">
    <property type="entry name" value="Aldolase class I"/>
    <property type="match status" value="1"/>
</dbReference>
<dbReference type="HAMAP" id="MF_01849">
    <property type="entry name" value="RNA_methyltr_RlmN"/>
    <property type="match status" value="1"/>
</dbReference>
<dbReference type="InterPro" id="IPR013785">
    <property type="entry name" value="Aldolase_TIM"/>
</dbReference>
<dbReference type="InterPro" id="IPR040072">
    <property type="entry name" value="Methyltransferase_A"/>
</dbReference>
<dbReference type="InterPro" id="IPR048641">
    <property type="entry name" value="RlmN_N"/>
</dbReference>
<dbReference type="InterPro" id="IPR027492">
    <property type="entry name" value="RNA_MTrfase_RlmN"/>
</dbReference>
<dbReference type="InterPro" id="IPR004383">
    <property type="entry name" value="rRNA_lsu_MTrfase_RlmN/Cfr"/>
</dbReference>
<dbReference type="InterPro" id="IPR007197">
    <property type="entry name" value="rSAM"/>
</dbReference>
<dbReference type="NCBIfam" id="TIGR00048">
    <property type="entry name" value="rRNA_mod_RlmN"/>
    <property type="match status" value="1"/>
</dbReference>
<dbReference type="PANTHER" id="PTHR30544">
    <property type="entry name" value="23S RRNA METHYLTRANSFERASE"/>
    <property type="match status" value="1"/>
</dbReference>
<dbReference type="PANTHER" id="PTHR30544:SF5">
    <property type="entry name" value="RADICAL SAM CORE DOMAIN-CONTAINING PROTEIN"/>
    <property type="match status" value="1"/>
</dbReference>
<dbReference type="Pfam" id="PF04055">
    <property type="entry name" value="Radical_SAM"/>
    <property type="match status" value="1"/>
</dbReference>
<dbReference type="Pfam" id="PF21016">
    <property type="entry name" value="RlmN_N"/>
    <property type="match status" value="1"/>
</dbReference>
<dbReference type="PIRSF" id="PIRSF006004">
    <property type="entry name" value="CHP00048"/>
    <property type="match status" value="1"/>
</dbReference>
<dbReference type="SFLD" id="SFLDF00275">
    <property type="entry name" value="adenosine_C2_methyltransferase"/>
    <property type="match status" value="1"/>
</dbReference>
<dbReference type="SFLD" id="SFLDS00029">
    <property type="entry name" value="Radical_SAM"/>
    <property type="match status" value="1"/>
</dbReference>
<dbReference type="SUPFAM" id="SSF102114">
    <property type="entry name" value="Radical SAM enzymes"/>
    <property type="match status" value="1"/>
</dbReference>
<dbReference type="PROSITE" id="PS51918">
    <property type="entry name" value="RADICAL_SAM"/>
    <property type="match status" value="1"/>
</dbReference>
<reference key="1">
    <citation type="journal article" date="2006" name="J. Bacteriol.">
        <title>Comparison of the genome sequence of the poultry pathogen Bordetella avium with those of B. bronchiseptica, B. pertussis, and B. parapertussis reveals extensive diversity in surface structures associated with host interaction.</title>
        <authorList>
            <person name="Sebaihia M."/>
            <person name="Preston A."/>
            <person name="Maskell D.J."/>
            <person name="Kuzmiak H."/>
            <person name="Connell T.D."/>
            <person name="King N.D."/>
            <person name="Orndorff P.E."/>
            <person name="Miyamoto D.M."/>
            <person name="Thomson N.R."/>
            <person name="Harris D."/>
            <person name="Goble A."/>
            <person name="Lord A."/>
            <person name="Murphy L."/>
            <person name="Quail M.A."/>
            <person name="Rutter S."/>
            <person name="Squares R."/>
            <person name="Squares S."/>
            <person name="Woodward J."/>
            <person name="Parkhill J."/>
            <person name="Temple L.M."/>
        </authorList>
    </citation>
    <scope>NUCLEOTIDE SEQUENCE [LARGE SCALE GENOMIC DNA]</scope>
    <source>
        <strain>197N</strain>
    </source>
</reference>
<feature type="chain" id="PRO_0000350054" description="Dual-specificity RNA methyltransferase RlmN">
    <location>
        <begin position="1"/>
        <end position="382"/>
    </location>
</feature>
<feature type="domain" description="Radical SAM core" evidence="2">
    <location>
        <begin position="101"/>
        <end position="347"/>
    </location>
</feature>
<feature type="active site" description="Proton acceptor" evidence="1">
    <location>
        <position position="95"/>
    </location>
</feature>
<feature type="active site" description="S-methylcysteine intermediate" evidence="1">
    <location>
        <position position="352"/>
    </location>
</feature>
<feature type="binding site" evidence="1">
    <location>
        <position position="115"/>
    </location>
    <ligand>
        <name>[4Fe-4S] cluster</name>
        <dbReference type="ChEBI" id="CHEBI:49883"/>
        <note>4Fe-4S-S-AdoMet</note>
    </ligand>
</feature>
<feature type="binding site" evidence="1">
    <location>
        <position position="119"/>
    </location>
    <ligand>
        <name>[4Fe-4S] cluster</name>
        <dbReference type="ChEBI" id="CHEBI:49883"/>
        <note>4Fe-4S-S-AdoMet</note>
    </ligand>
</feature>
<feature type="binding site" evidence="1">
    <location>
        <position position="122"/>
    </location>
    <ligand>
        <name>[4Fe-4S] cluster</name>
        <dbReference type="ChEBI" id="CHEBI:49883"/>
        <note>4Fe-4S-S-AdoMet</note>
    </ligand>
</feature>
<feature type="binding site" evidence="1">
    <location>
        <begin position="178"/>
        <end position="179"/>
    </location>
    <ligand>
        <name>S-adenosyl-L-methionine</name>
        <dbReference type="ChEBI" id="CHEBI:59789"/>
    </ligand>
</feature>
<feature type="binding site" evidence="1">
    <location>
        <position position="210"/>
    </location>
    <ligand>
        <name>S-adenosyl-L-methionine</name>
        <dbReference type="ChEBI" id="CHEBI:59789"/>
    </ligand>
</feature>
<feature type="binding site" evidence="1">
    <location>
        <begin position="232"/>
        <end position="234"/>
    </location>
    <ligand>
        <name>S-adenosyl-L-methionine</name>
        <dbReference type="ChEBI" id="CHEBI:59789"/>
    </ligand>
</feature>
<feature type="binding site" evidence="1">
    <location>
        <position position="309"/>
    </location>
    <ligand>
        <name>S-adenosyl-L-methionine</name>
        <dbReference type="ChEBI" id="CHEBI:59789"/>
    </ligand>
</feature>
<feature type="disulfide bond" description="(transient)" evidence="1">
    <location>
        <begin position="108"/>
        <end position="352"/>
    </location>
</feature>
<name>RLMN_BORA1</name>
<evidence type="ECO:0000255" key="1">
    <source>
        <dbReference type="HAMAP-Rule" id="MF_01849"/>
    </source>
</evidence>
<evidence type="ECO:0000255" key="2">
    <source>
        <dbReference type="PROSITE-ProRule" id="PRU01266"/>
    </source>
</evidence>
<sequence length="382" mass="42437">MDTVEPINLLGLDAKALTDLVGQWGGKPFRARQLQRWVHQRSVDSFDAMTDLARDFRAQLSERAIIEALPVNIEQRSSDGTRKWLFDVGQGNAIETVFIPEDDRGTLCISSQAGCVVNCRFCSTGHQGFNRNLRTSEIIGQLWWAKRVLEADIGSARLANAGAEDTRVISNVVMMGMGEPLLNYDQVLPALRLMLDDNGYGLSRRRVTVSTSGVVPMMDRLAQDCPVALAVSLHAPNDALRDDLVPLNKKYPLKELLAACERYLAHAPRDFITFEYCMLDGINDTDQHAKELIQLARQVRCKLNLIPFNPFPASGLKRSAAPRVKVFAQRLMDAGIITTVRKTRGDDIDAACGQLAGEVKDRTRITERNAASRSIPIRQVHA</sequence>
<accession>Q2KY87</accession>
<protein>
    <recommendedName>
        <fullName evidence="1">Dual-specificity RNA methyltransferase RlmN</fullName>
        <ecNumber evidence="1">2.1.1.192</ecNumber>
    </recommendedName>
    <alternativeName>
        <fullName evidence="1">23S rRNA (adenine(2503)-C(2))-methyltransferase</fullName>
    </alternativeName>
    <alternativeName>
        <fullName evidence="1">23S rRNA m2A2503 methyltransferase</fullName>
    </alternativeName>
    <alternativeName>
        <fullName evidence="1">Ribosomal RNA large subunit methyltransferase N</fullName>
    </alternativeName>
    <alternativeName>
        <fullName evidence="1">tRNA (adenine(37)-C(2))-methyltransferase</fullName>
    </alternativeName>
    <alternativeName>
        <fullName evidence="1">tRNA m2A37 methyltransferase</fullName>
    </alternativeName>
</protein>
<gene>
    <name evidence="1" type="primary">rlmN</name>
    <name type="ordered locus">BAV2346</name>
</gene>
<comment type="function">
    <text evidence="1">Specifically methylates position 2 of adenine 2503 in 23S rRNA and position 2 of adenine 37 in tRNAs. m2A2503 modification seems to play a crucial role in the proofreading step occurring at the peptidyl transferase center and thus would serve to optimize ribosomal fidelity.</text>
</comment>
<comment type="catalytic activity">
    <reaction evidence="1">
        <text>adenosine(2503) in 23S rRNA + 2 reduced [2Fe-2S]-[ferredoxin] + 2 S-adenosyl-L-methionine = 2-methyladenosine(2503) in 23S rRNA + 5'-deoxyadenosine + L-methionine + 2 oxidized [2Fe-2S]-[ferredoxin] + S-adenosyl-L-homocysteine</text>
        <dbReference type="Rhea" id="RHEA:42916"/>
        <dbReference type="Rhea" id="RHEA-COMP:10000"/>
        <dbReference type="Rhea" id="RHEA-COMP:10001"/>
        <dbReference type="Rhea" id="RHEA-COMP:10152"/>
        <dbReference type="Rhea" id="RHEA-COMP:10282"/>
        <dbReference type="ChEBI" id="CHEBI:17319"/>
        <dbReference type="ChEBI" id="CHEBI:33737"/>
        <dbReference type="ChEBI" id="CHEBI:33738"/>
        <dbReference type="ChEBI" id="CHEBI:57844"/>
        <dbReference type="ChEBI" id="CHEBI:57856"/>
        <dbReference type="ChEBI" id="CHEBI:59789"/>
        <dbReference type="ChEBI" id="CHEBI:74411"/>
        <dbReference type="ChEBI" id="CHEBI:74497"/>
        <dbReference type="EC" id="2.1.1.192"/>
    </reaction>
</comment>
<comment type="catalytic activity">
    <reaction evidence="1">
        <text>adenosine(37) in tRNA + 2 reduced [2Fe-2S]-[ferredoxin] + 2 S-adenosyl-L-methionine = 2-methyladenosine(37) in tRNA + 5'-deoxyadenosine + L-methionine + 2 oxidized [2Fe-2S]-[ferredoxin] + S-adenosyl-L-homocysteine</text>
        <dbReference type="Rhea" id="RHEA:43332"/>
        <dbReference type="Rhea" id="RHEA-COMP:10000"/>
        <dbReference type="Rhea" id="RHEA-COMP:10001"/>
        <dbReference type="Rhea" id="RHEA-COMP:10162"/>
        <dbReference type="Rhea" id="RHEA-COMP:10485"/>
        <dbReference type="ChEBI" id="CHEBI:17319"/>
        <dbReference type="ChEBI" id="CHEBI:33737"/>
        <dbReference type="ChEBI" id="CHEBI:33738"/>
        <dbReference type="ChEBI" id="CHEBI:57844"/>
        <dbReference type="ChEBI" id="CHEBI:57856"/>
        <dbReference type="ChEBI" id="CHEBI:59789"/>
        <dbReference type="ChEBI" id="CHEBI:74411"/>
        <dbReference type="ChEBI" id="CHEBI:74497"/>
        <dbReference type="EC" id="2.1.1.192"/>
    </reaction>
</comment>
<comment type="cofactor">
    <cofactor evidence="1">
        <name>[4Fe-4S] cluster</name>
        <dbReference type="ChEBI" id="CHEBI:49883"/>
    </cofactor>
    <text evidence="1">Binds 1 [4Fe-4S] cluster. The cluster is coordinated with 3 cysteines and an exchangeable S-adenosyl-L-methionine.</text>
</comment>
<comment type="subcellular location">
    <subcellularLocation>
        <location evidence="1">Cytoplasm</location>
    </subcellularLocation>
</comment>
<comment type="miscellaneous">
    <text evidence="1">Reaction proceeds by a ping-pong mechanism involving intermediate methylation of a conserved cysteine residue.</text>
</comment>
<comment type="similarity">
    <text evidence="1">Belongs to the radical SAM superfamily. RlmN family.</text>
</comment>
<keyword id="KW-0004">4Fe-4S</keyword>
<keyword id="KW-0963">Cytoplasm</keyword>
<keyword id="KW-1015">Disulfide bond</keyword>
<keyword id="KW-0408">Iron</keyword>
<keyword id="KW-0411">Iron-sulfur</keyword>
<keyword id="KW-0479">Metal-binding</keyword>
<keyword id="KW-0489">Methyltransferase</keyword>
<keyword id="KW-1185">Reference proteome</keyword>
<keyword id="KW-0698">rRNA processing</keyword>
<keyword id="KW-0949">S-adenosyl-L-methionine</keyword>
<keyword id="KW-0808">Transferase</keyword>
<keyword id="KW-0819">tRNA processing</keyword>
<proteinExistence type="inferred from homology"/>